<comment type="similarity">
    <text evidence="1">Belongs to the UPF0179 family.</text>
</comment>
<keyword id="KW-1185">Reference proteome</keyword>
<evidence type="ECO:0000255" key="1">
    <source>
        <dbReference type="HAMAP-Rule" id="MF_00498"/>
    </source>
</evidence>
<sequence>MVTVTLISKPQARVGGNFRVIKIPEECYRCKLYGICMGRLRPGRAYRITEVRPLKYPSPYKCLLNGDEMVPVVVEEENLILPIKLPYIIEGSITSFDKSWCICHPCPSEEALPSRVKIIKVIDRRQCGSGWFFLVEAKPLD</sequence>
<gene>
    <name type="ordered locus">Cmaq_1008</name>
</gene>
<dbReference type="EMBL" id="CP000852">
    <property type="protein sequence ID" value="ABW01839.1"/>
    <property type="molecule type" value="Genomic_DNA"/>
</dbReference>
<dbReference type="RefSeq" id="WP_012186058.1">
    <property type="nucleotide sequence ID" value="NC_009954.1"/>
</dbReference>
<dbReference type="STRING" id="397948.Cmaq_1008"/>
<dbReference type="GeneID" id="5710056"/>
<dbReference type="KEGG" id="cma:Cmaq_1008"/>
<dbReference type="eggNOG" id="arCOG04477">
    <property type="taxonomic scope" value="Archaea"/>
</dbReference>
<dbReference type="HOGENOM" id="CLU_121764_0_0_2"/>
<dbReference type="OrthoDB" id="24613at2157"/>
<dbReference type="Proteomes" id="UP000001137">
    <property type="component" value="Chromosome"/>
</dbReference>
<dbReference type="HAMAP" id="MF_00498">
    <property type="entry name" value="UPF0179"/>
    <property type="match status" value="1"/>
</dbReference>
<dbReference type="InterPro" id="IPR005369">
    <property type="entry name" value="UPF0179"/>
</dbReference>
<dbReference type="PANTHER" id="PTHR40699">
    <property type="entry name" value="UPF0179 PROTEIN MJ1627"/>
    <property type="match status" value="1"/>
</dbReference>
<dbReference type="PANTHER" id="PTHR40699:SF1">
    <property type="entry name" value="UPF0179 PROTEIN MJ1627"/>
    <property type="match status" value="1"/>
</dbReference>
<dbReference type="Pfam" id="PF03684">
    <property type="entry name" value="UPF0179"/>
    <property type="match status" value="1"/>
</dbReference>
<proteinExistence type="inferred from homology"/>
<name>Y1008_CALMQ</name>
<accession>A8MDI3</accession>
<protein>
    <recommendedName>
        <fullName evidence="1">UPF0179 protein Cmaq_1008</fullName>
    </recommendedName>
</protein>
<organism>
    <name type="scientific">Caldivirga maquilingensis (strain ATCC 700844 / DSM 13496 / JCM 10307 / IC-167)</name>
    <dbReference type="NCBI Taxonomy" id="397948"/>
    <lineage>
        <taxon>Archaea</taxon>
        <taxon>Thermoproteota</taxon>
        <taxon>Thermoprotei</taxon>
        <taxon>Thermoproteales</taxon>
        <taxon>Thermoproteaceae</taxon>
        <taxon>Caldivirga</taxon>
    </lineage>
</organism>
<feature type="chain" id="PRO_0000378111" description="UPF0179 protein Cmaq_1008">
    <location>
        <begin position="1"/>
        <end position="141"/>
    </location>
</feature>
<reference key="1">
    <citation type="submission" date="2007-10" db="EMBL/GenBank/DDBJ databases">
        <title>Complete sequence of Caldivirga maquilingensis IC-167.</title>
        <authorList>
            <consortium name="US DOE Joint Genome Institute"/>
            <person name="Copeland A."/>
            <person name="Lucas S."/>
            <person name="Lapidus A."/>
            <person name="Barry K."/>
            <person name="Glavina del Rio T."/>
            <person name="Dalin E."/>
            <person name="Tice H."/>
            <person name="Pitluck S."/>
            <person name="Saunders E."/>
            <person name="Brettin T."/>
            <person name="Bruce D."/>
            <person name="Detter J.C."/>
            <person name="Han C."/>
            <person name="Schmutz J."/>
            <person name="Larimer F."/>
            <person name="Land M."/>
            <person name="Hauser L."/>
            <person name="Kyrpides N."/>
            <person name="Ivanova N."/>
            <person name="Biddle J.F."/>
            <person name="Zhang Z."/>
            <person name="Fitz-Gibbon S.T."/>
            <person name="Lowe T.M."/>
            <person name="Saltikov C."/>
            <person name="House C.H."/>
            <person name="Richardson P."/>
        </authorList>
    </citation>
    <scope>NUCLEOTIDE SEQUENCE [LARGE SCALE GENOMIC DNA]</scope>
    <source>
        <strain>ATCC 700844 / DSM 13496 / JCM 10307 / IC-167</strain>
    </source>
</reference>